<reference evidence="3 4" key="1">
    <citation type="journal article" date="2001" name="J. Bacteriol.">
        <title>nag genes of Ralstonia (formerly Pseudomonas) sp. strain U2 encoding enzymes for gentisate catabolism.</title>
        <authorList>
            <person name="Zhou N.Y."/>
            <person name="Fuenmayor S.L."/>
            <person name="Williams P.A."/>
        </authorList>
    </citation>
    <scope>NUCLEOTIDE SEQUENCE [GENOMIC DNA]</scope>
    <scope>FUNCTION</scope>
    <source>
        <strain evidence="4">U2</strain>
    </source>
</reference>
<keyword id="KW-0010">Activator</keyword>
<keyword id="KW-0058">Aromatic hydrocarbons catabolism</keyword>
<keyword id="KW-0238">DNA-binding</keyword>
<keyword id="KW-0614">Plasmid</keyword>
<keyword id="KW-0804">Transcription</keyword>
<keyword id="KW-0805">Transcription regulation</keyword>
<evidence type="ECO:0000255" key="1">
    <source>
        <dbReference type="PROSITE-ProRule" id="PRU00253"/>
    </source>
</evidence>
<evidence type="ECO:0000269" key="2">
    <source>
    </source>
</evidence>
<evidence type="ECO:0000305" key="3"/>
<evidence type="ECO:0000312" key="4">
    <source>
        <dbReference type="EMBL" id="AAG13636.1"/>
    </source>
</evidence>
<sequence>MDLRDIDLNLLVVFNQLLLDRSVSTAGEKLGLTQPAVSNSLKRLRAALKDDLFLRTSKGMEPTPYALHLAEPVIYALNTLQTALTTRDSFDPFASTRTFNLAMTDIGEMYFMPPLMEALAQRAPHIQISTLRPNAGNLKEDMESGAVDLALGLLPELQTGFFQRRLFRHRYVCMFRKDHPSAKSPMSLKQFSELEHVGVVALNTGHGEVDGLLERAGIKRRMRLVVPHFIAIGPILHSTDLIATVPQRFAVRCEVPFGLTTSPHPAKLPDIAINLFWHAKYNRDPGNMWLRQLFVELFSEA</sequence>
<gene>
    <name evidence="4" type="primary">nagR</name>
</gene>
<proteinExistence type="inferred from homology"/>
<geneLocation type="plasmid" evidence="4">
    <name>pWWU2</name>
</geneLocation>
<accession>Q9EXL7</accession>
<comment type="function">
    <text evidence="2">May regulate the expression of the naphthalene (nagA-F) and salicylate (nagG-M) metabolism genes.</text>
</comment>
<comment type="similarity">
    <text evidence="3">Belongs to the LysR transcriptional regulatory family.</text>
</comment>
<organism>
    <name type="scientific">Ralstonia sp</name>
    <dbReference type="NCBI Taxonomy" id="54061"/>
    <lineage>
        <taxon>Bacteria</taxon>
        <taxon>Pseudomonadati</taxon>
        <taxon>Pseudomonadota</taxon>
        <taxon>Betaproteobacteria</taxon>
        <taxon>Burkholderiales</taxon>
        <taxon>Burkholderiaceae</taxon>
        <taxon>Ralstonia</taxon>
    </lineage>
</organism>
<feature type="chain" id="PRO_0000421809" description="HTH-type transcriptional activator NagR">
    <location>
        <begin position="1"/>
        <end position="301"/>
    </location>
</feature>
<feature type="domain" description="HTH lysR-type" evidence="1">
    <location>
        <begin position="6"/>
        <end position="63"/>
    </location>
</feature>
<feature type="DNA-binding region" description="H-T-H motif" evidence="1">
    <location>
        <begin position="23"/>
        <end position="42"/>
    </location>
</feature>
<name>NAGR_RALSP</name>
<protein>
    <recommendedName>
        <fullName>HTH-type transcriptional activator NagR</fullName>
    </recommendedName>
</protein>
<dbReference type="EMBL" id="AF036940">
    <property type="protein sequence ID" value="AAG13636.1"/>
    <property type="molecule type" value="Genomic_DNA"/>
</dbReference>
<dbReference type="SMR" id="Q9EXL7"/>
<dbReference type="GO" id="GO:0003677">
    <property type="term" value="F:DNA binding"/>
    <property type="evidence" value="ECO:0007669"/>
    <property type="project" value="UniProtKB-KW"/>
</dbReference>
<dbReference type="GO" id="GO:0003700">
    <property type="term" value="F:DNA-binding transcription factor activity"/>
    <property type="evidence" value="ECO:0007669"/>
    <property type="project" value="InterPro"/>
</dbReference>
<dbReference type="GO" id="GO:0009056">
    <property type="term" value="P:catabolic process"/>
    <property type="evidence" value="ECO:0007669"/>
    <property type="project" value="UniProtKB-KW"/>
</dbReference>
<dbReference type="CDD" id="cd08459">
    <property type="entry name" value="PBP2_DntR_NahR_LinR_like"/>
    <property type="match status" value="1"/>
</dbReference>
<dbReference type="Gene3D" id="3.40.190.10">
    <property type="entry name" value="Periplasmic binding protein-like II"/>
    <property type="match status" value="2"/>
</dbReference>
<dbReference type="Gene3D" id="1.10.10.10">
    <property type="entry name" value="Winged helix-like DNA-binding domain superfamily/Winged helix DNA-binding domain"/>
    <property type="match status" value="1"/>
</dbReference>
<dbReference type="InterPro" id="IPR050389">
    <property type="entry name" value="LysR-type_TF"/>
</dbReference>
<dbReference type="InterPro" id="IPR005119">
    <property type="entry name" value="LysR_subst-bd"/>
</dbReference>
<dbReference type="InterPro" id="IPR000847">
    <property type="entry name" value="Tscrpt_reg_HTH_LysR"/>
</dbReference>
<dbReference type="InterPro" id="IPR036388">
    <property type="entry name" value="WH-like_DNA-bd_sf"/>
</dbReference>
<dbReference type="InterPro" id="IPR036390">
    <property type="entry name" value="WH_DNA-bd_sf"/>
</dbReference>
<dbReference type="PANTHER" id="PTHR30118">
    <property type="entry name" value="HTH-TYPE TRANSCRIPTIONAL REGULATOR LEUO-RELATED"/>
    <property type="match status" value="1"/>
</dbReference>
<dbReference type="PANTHER" id="PTHR30118:SF15">
    <property type="entry name" value="TRANSCRIPTIONAL REGULATORY PROTEIN"/>
    <property type="match status" value="1"/>
</dbReference>
<dbReference type="Pfam" id="PF00126">
    <property type="entry name" value="HTH_1"/>
    <property type="match status" value="1"/>
</dbReference>
<dbReference type="Pfam" id="PF03466">
    <property type="entry name" value="LysR_substrate"/>
    <property type="match status" value="1"/>
</dbReference>
<dbReference type="PRINTS" id="PR00039">
    <property type="entry name" value="HTHLYSR"/>
</dbReference>
<dbReference type="SUPFAM" id="SSF53850">
    <property type="entry name" value="Periplasmic binding protein-like II"/>
    <property type="match status" value="1"/>
</dbReference>
<dbReference type="SUPFAM" id="SSF46785">
    <property type="entry name" value="Winged helix' DNA-binding domain"/>
    <property type="match status" value="1"/>
</dbReference>
<dbReference type="PROSITE" id="PS50931">
    <property type="entry name" value="HTH_LYSR"/>
    <property type="match status" value="1"/>
</dbReference>